<sequence length="164" mass="18156">MSQSICSTGLRWLWLVVVVLIIDLGSKYLILQNFALGDTVPLFPSLNLHYARNYGAAFSFLADSGGWQRWFFAGIAIGISVILAVMMYRSKATQKLNNIAYALIIGGALGNLFDRLWHGFVVDMIDFYVGDWHFATFNLADTAICVGAALIVLEGFLPSRAKKQ</sequence>
<evidence type="ECO:0000255" key="1">
    <source>
        <dbReference type="HAMAP-Rule" id="MF_00161"/>
    </source>
</evidence>
<comment type="function">
    <text evidence="1">This protein specifically catalyzes the removal of signal peptides from prolipoproteins.</text>
</comment>
<comment type="catalytic activity">
    <reaction evidence="1">
        <text>Release of signal peptides from bacterial membrane prolipoproteins. Hydrolyzes -Xaa-Yaa-Zaa-|-(S,diacylglyceryl)Cys-, in which Xaa is hydrophobic (preferably Leu), and Yaa (Ala or Ser) and Zaa (Gly or Ala) have small, neutral side chains.</text>
        <dbReference type="EC" id="3.4.23.36"/>
    </reaction>
</comment>
<comment type="pathway">
    <text evidence="1">Protein modification; lipoprotein biosynthesis (signal peptide cleavage).</text>
</comment>
<comment type="subcellular location">
    <subcellularLocation>
        <location evidence="1">Cell inner membrane</location>
        <topology evidence="1">Multi-pass membrane protein</topology>
    </subcellularLocation>
</comment>
<comment type="similarity">
    <text evidence="1">Belongs to the peptidase A8 family.</text>
</comment>
<accession>Q3Z5Y3</accession>
<gene>
    <name evidence="1" type="primary">lspA</name>
    <name type="ordered locus">SSON_0032</name>
</gene>
<proteinExistence type="inferred from homology"/>
<dbReference type="EC" id="3.4.23.36" evidence="1"/>
<dbReference type="EMBL" id="CP000038">
    <property type="protein sequence ID" value="AAZ86829.1"/>
    <property type="molecule type" value="Genomic_DNA"/>
</dbReference>
<dbReference type="RefSeq" id="WP_000083372.1">
    <property type="nucleotide sequence ID" value="NC_007384.1"/>
</dbReference>
<dbReference type="SMR" id="Q3Z5Y3"/>
<dbReference type="MEROPS" id="A08.001"/>
<dbReference type="GeneID" id="93777409"/>
<dbReference type="KEGG" id="ssn:SSON_0032"/>
<dbReference type="HOGENOM" id="CLU_083252_4_0_6"/>
<dbReference type="UniPathway" id="UPA00665"/>
<dbReference type="Proteomes" id="UP000002529">
    <property type="component" value="Chromosome"/>
</dbReference>
<dbReference type="GO" id="GO:0005886">
    <property type="term" value="C:plasma membrane"/>
    <property type="evidence" value="ECO:0007669"/>
    <property type="project" value="UniProtKB-SubCell"/>
</dbReference>
<dbReference type="GO" id="GO:0004190">
    <property type="term" value="F:aspartic-type endopeptidase activity"/>
    <property type="evidence" value="ECO:0007669"/>
    <property type="project" value="UniProtKB-UniRule"/>
</dbReference>
<dbReference type="GO" id="GO:0006508">
    <property type="term" value="P:proteolysis"/>
    <property type="evidence" value="ECO:0007669"/>
    <property type="project" value="UniProtKB-KW"/>
</dbReference>
<dbReference type="HAMAP" id="MF_00161">
    <property type="entry name" value="LspA"/>
    <property type="match status" value="1"/>
</dbReference>
<dbReference type="InterPro" id="IPR001872">
    <property type="entry name" value="Peptidase_A8"/>
</dbReference>
<dbReference type="NCBIfam" id="TIGR00077">
    <property type="entry name" value="lspA"/>
    <property type="match status" value="1"/>
</dbReference>
<dbReference type="PANTHER" id="PTHR33695">
    <property type="entry name" value="LIPOPROTEIN SIGNAL PEPTIDASE"/>
    <property type="match status" value="1"/>
</dbReference>
<dbReference type="PANTHER" id="PTHR33695:SF1">
    <property type="entry name" value="LIPOPROTEIN SIGNAL PEPTIDASE"/>
    <property type="match status" value="1"/>
</dbReference>
<dbReference type="Pfam" id="PF01252">
    <property type="entry name" value="Peptidase_A8"/>
    <property type="match status" value="1"/>
</dbReference>
<dbReference type="PRINTS" id="PR00781">
    <property type="entry name" value="LIPOSIGPTASE"/>
</dbReference>
<dbReference type="PROSITE" id="PS00855">
    <property type="entry name" value="SPASE_II"/>
    <property type="match status" value="1"/>
</dbReference>
<reference key="1">
    <citation type="journal article" date="2005" name="Nucleic Acids Res.">
        <title>Genome dynamics and diversity of Shigella species, the etiologic agents of bacillary dysentery.</title>
        <authorList>
            <person name="Yang F."/>
            <person name="Yang J."/>
            <person name="Zhang X."/>
            <person name="Chen L."/>
            <person name="Jiang Y."/>
            <person name="Yan Y."/>
            <person name="Tang X."/>
            <person name="Wang J."/>
            <person name="Xiong Z."/>
            <person name="Dong J."/>
            <person name="Xue Y."/>
            <person name="Zhu Y."/>
            <person name="Xu X."/>
            <person name="Sun L."/>
            <person name="Chen S."/>
            <person name="Nie H."/>
            <person name="Peng J."/>
            <person name="Xu J."/>
            <person name="Wang Y."/>
            <person name="Yuan Z."/>
            <person name="Wen Y."/>
            <person name="Yao Z."/>
            <person name="Shen Y."/>
            <person name="Qiang B."/>
            <person name="Hou Y."/>
            <person name="Yu J."/>
            <person name="Jin Q."/>
        </authorList>
    </citation>
    <scope>NUCLEOTIDE SEQUENCE [LARGE SCALE GENOMIC DNA]</scope>
    <source>
        <strain>Ss046</strain>
    </source>
</reference>
<keyword id="KW-0064">Aspartyl protease</keyword>
<keyword id="KW-0997">Cell inner membrane</keyword>
<keyword id="KW-1003">Cell membrane</keyword>
<keyword id="KW-0378">Hydrolase</keyword>
<keyword id="KW-0472">Membrane</keyword>
<keyword id="KW-0645">Protease</keyword>
<keyword id="KW-1185">Reference proteome</keyword>
<keyword id="KW-0812">Transmembrane</keyword>
<keyword id="KW-1133">Transmembrane helix</keyword>
<organism>
    <name type="scientific">Shigella sonnei (strain Ss046)</name>
    <dbReference type="NCBI Taxonomy" id="300269"/>
    <lineage>
        <taxon>Bacteria</taxon>
        <taxon>Pseudomonadati</taxon>
        <taxon>Pseudomonadota</taxon>
        <taxon>Gammaproteobacteria</taxon>
        <taxon>Enterobacterales</taxon>
        <taxon>Enterobacteriaceae</taxon>
        <taxon>Shigella</taxon>
    </lineage>
</organism>
<name>LSPA_SHISS</name>
<feature type="chain" id="PRO_0000289427" description="Lipoprotein signal peptidase">
    <location>
        <begin position="1"/>
        <end position="164"/>
    </location>
</feature>
<feature type="transmembrane region" description="Helical" evidence="1">
    <location>
        <begin position="12"/>
        <end position="32"/>
    </location>
</feature>
<feature type="transmembrane region" description="Helical" evidence="1">
    <location>
        <begin position="70"/>
        <end position="90"/>
    </location>
</feature>
<feature type="transmembrane region" description="Helical" evidence="1">
    <location>
        <begin position="102"/>
        <end position="122"/>
    </location>
</feature>
<feature type="transmembrane region" description="Helical" evidence="1">
    <location>
        <begin position="137"/>
        <end position="157"/>
    </location>
</feature>
<feature type="active site" evidence="1">
    <location>
        <position position="123"/>
    </location>
</feature>
<feature type="active site" evidence="1">
    <location>
        <position position="141"/>
    </location>
</feature>
<protein>
    <recommendedName>
        <fullName evidence="1">Lipoprotein signal peptidase</fullName>
        <ecNumber evidence="1">3.4.23.36</ecNumber>
    </recommendedName>
    <alternativeName>
        <fullName evidence="1">Prolipoprotein signal peptidase</fullName>
    </alternativeName>
    <alternativeName>
        <fullName evidence="1">Signal peptidase II</fullName>
        <shortName evidence="1">SPase II</shortName>
    </alternativeName>
</protein>